<proteinExistence type="inferred from homology"/>
<reference key="1">
    <citation type="journal article" date="2005" name="Arch. Microbiol.">
        <title>The genome sequence of an anaerobic aromatic-degrading denitrifying bacterium, strain EbN1.</title>
        <authorList>
            <person name="Rabus R."/>
            <person name="Kube M."/>
            <person name="Heider J."/>
            <person name="Beck A."/>
            <person name="Heitmann K."/>
            <person name="Widdel F."/>
            <person name="Reinhardt R."/>
        </authorList>
    </citation>
    <scope>NUCLEOTIDE SEQUENCE [LARGE SCALE GENOMIC DNA]</scope>
    <source>
        <strain>DSM 19018 / LMG 30748 / EbN1</strain>
    </source>
</reference>
<accession>Q5P7J1</accession>
<gene>
    <name evidence="1" type="primary">rsmA</name>
    <name evidence="1" type="synonym">ksgA</name>
    <name type="ordered locus">AZOSEA05980</name>
    <name type="ORF">ebA1138</name>
</gene>
<sequence>MSEHRARKRFGQNFLSDPNIIRKIIDAIHPVPGETVVEIGPGLGAMTDPLVERLGHLHVVEIDRDLIARLHERYSPERLTIHEGDALKFDFATLGAPLRVVGNLPYNISTPLLFHLAEFAARVRDMTFMLQKEVVMRMVAEPGTEDYGRLSVMLQYRFRMGRLFDVPPGAFRPAPKVTSSIVRMVPLPAEQRTAKDEALLERVVAAAFGQRRKTLRNTLREWLDEADFPALGIDPGLRGERLTVADYVAITNYIAAKSPRALANA</sequence>
<feature type="chain" id="PRO_0000101475" description="Ribosomal RNA small subunit methyltransferase A">
    <location>
        <begin position="1"/>
        <end position="265"/>
    </location>
</feature>
<feature type="binding site" evidence="1">
    <location>
        <position position="13"/>
    </location>
    <ligand>
        <name>S-adenosyl-L-methionine</name>
        <dbReference type="ChEBI" id="CHEBI:59789"/>
    </ligand>
</feature>
<feature type="binding site" evidence="1">
    <location>
        <position position="15"/>
    </location>
    <ligand>
        <name>S-adenosyl-L-methionine</name>
        <dbReference type="ChEBI" id="CHEBI:59789"/>
    </ligand>
</feature>
<feature type="binding site" evidence="1">
    <location>
        <position position="40"/>
    </location>
    <ligand>
        <name>S-adenosyl-L-methionine</name>
        <dbReference type="ChEBI" id="CHEBI:59789"/>
    </ligand>
</feature>
<feature type="binding site" evidence="1">
    <location>
        <position position="61"/>
    </location>
    <ligand>
        <name>S-adenosyl-L-methionine</name>
        <dbReference type="ChEBI" id="CHEBI:59789"/>
    </ligand>
</feature>
<feature type="binding site" evidence="1">
    <location>
        <position position="85"/>
    </location>
    <ligand>
        <name>S-adenosyl-L-methionine</name>
        <dbReference type="ChEBI" id="CHEBI:59789"/>
    </ligand>
</feature>
<feature type="binding site" evidence="1">
    <location>
        <position position="103"/>
    </location>
    <ligand>
        <name>S-adenosyl-L-methionine</name>
        <dbReference type="ChEBI" id="CHEBI:59789"/>
    </ligand>
</feature>
<evidence type="ECO:0000255" key="1">
    <source>
        <dbReference type="HAMAP-Rule" id="MF_00607"/>
    </source>
</evidence>
<organism>
    <name type="scientific">Aromatoleum aromaticum (strain DSM 19018 / LMG 30748 / EbN1)</name>
    <name type="common">Azoarcus sp. (strain EbN1)</name>
    <dbReference type="NCBI Taxonomy" id="76114"/>
    <lineage>
        <taxon>Bacteria</taxon>
        <taxon>Pseudomonadati</taxon>
        <taxon>Pseudomonadota</taxon>
        <taxon>Betaproteobacteria</taxon>
        <taxon>Rhodocyclales</taxon>
        <taxon>Rhodocyclaceae</taxon>
        <taxon>Aromatoleum</taxon>
    </lineage>
</organism>
<name>RSMA_AROAE</name>
<dbReference type="EC" id="2.1.1.182" evidence="1"/>
<dbReference type="EMBL" id="CR555306">
    <property type="protein sequence ID" value="CAI06720.1"/>
    <property type="molecule type" value="Genomic_DNA"/>
</dbReference>
<dbReference type="RefSeq" id="WP_011236450.1">
    <property type="nucleotide sequence ID" value="NC_006513.1"/>
</dbReference>
<dbReference type="SMR" id="Q5P7J1"/>
<dbReference type="STRING" id="76114.ebA1138"/>
<dbReference type="KEGG" id="eba:ebA1138"/>
<dbReference type="eggNOG" id="COG0030">
    <property type="taxonomic scope" value="Bacteria"/>
</dbReference>
<dbReference type="HOGENOM" id="CLU_041220_0_1_4"/>
<dbReference type="OrthoDB" id="9814755at2"/>
<dbReference type="Proteomes" id="UP000006552">
    <property type="component" value="Chromosome"/>
</dbReference>
<dbReference type="GO" id="GO:0005829">
    <property type="term" value="C:cytosol"/>
    <property type="evidence" value="ECO:0007669"/>
    <property type="project" value="TreeGrafter"/>
</dbReference>
<dbReference type="GO" id="GO:0052908">
    <property type="term" value="F:16S rRNA (adenine(1518)-N(6)/adenine(1519)-N(6))-dimethyltransferase activity"/>
    <property type="evidence" value="ECO:0007669"/>
    <property type="project" value="UniProtKB-EC"/>
</dbReference>
<dbReference type="GO" id="GO:0003723">
    <property type="term" value="F:RNA binding"/>
    <property type="evidence" value="ECO:0007669"/>
    <property type="project" value="UniProtKB-KW"/>
</dbReference>
<dbReference type="CDD" id="cd02440">
    <property type="entry name" value="AdoMet_MTases"/>
    <property type="match status" value="1"/>
</dbReference>
<dbReference type="FunFam" id="1.10.8.100:FF:000001">
    <property type="entry name" value="Ribosomal RNA small subunit methyltransferase A"/>
    <property type="match status" value="1"/>
</dbReference>
<dbReference type="Gene3D" id="1.10.8.100">
    <property type="entry name" value="Ribosomal RNA adenine dimethylase-like, domain 2"/>
    <property type="match status" value="1"/>
</dbReference>
<dbReference type="Gene3D" id="3.40.50.150">
    <property type="entry name" value="Vaccinia Virus protein VP39"/>
    <property type="match status" value="1"/>
</dbReference>
<dbReference type="HAMAP" id="MF_00607">
    <property type="entry name" value="16SrRNA_methyltr_A"/>
    <property type="match status" value="1"/>
</dbReference>
<dbReference type="InterPro" id="IPR001737">
    <property type="entry name" value="KsgA/Erm"/>
</dbReference>
<dbReference type="InterPro" id="IPR023165">
    <property type="entry name" value="rRNA_Ade_diMease-like_C"/>
</dbReference>
<dbReference type="InterPro" id="IPR020596">
    <property type="entry name" value="rRNA_Ade_Mease_Trfase_CS"/>
</dbReference>
<dbReference type="InterPro" id="IPR020598">
    <property type="entry name" value="rRNA_Ade_methylase_Trfase_N"/>
</dbReference>
<dbReference type="InterPro" id="IPR011530">
    <property type="entry name" value="rRNA_adenine_dimethylase"/>
</dbReference>
<dbReference type="InterPro" id="IPR029063">
    <property type="entry name" value="SAM-dependent_MTases_sf"/>
</dbReference>
<dbReference type="NCBIfam" id="TIGR00755">
    <property type="entry name" value="ksgA"/>
    <property type="match status" value="1"/>
</dbReference>
<dbReference type="PANTHER" id="PTHR11727">
    <property type="entry name" value="DIMETHYLADENOSINE TRANSFERASE"/>
    <property type="match status" value="1"/>
</dbReference>
<dbReference type="PANTHER" id="PTHR11727:SF7">
    <property type="entry name" value="DIMETHYLADENOSINE TRANSFERASE-RELATED"/>
    <property type="match status" value="1"/>
</dbReference>
<dbReference type="Pfam" id="PF00398">
    <property type="entry name" value="RrnaAD"/>
    <property type="match status" value="1"/>
</dbReference>
<dbReference type="SMART" id="SM00650">
    <property type="entry name" value="rADc"/>
    <property type="match status" value="1"/>
</dbReference>
<dbReference type="SUPFAM" id="SSF53335">
    <property type="entry name" value="S-adenosyl-L-methionine-dependent methyltransferases"/>
    <property type="match status" value="1"/>
</dbReference>
<dbReference type="PROSITE" id="PS01131">
    <property type="entry name" value="RRNA_A_DIMETH"/>
    <property type="match status" value="1"/>
</dbReference>
<dbReference type="PROSITE" id="PS51689">
    <property type="entry name" value="SAM_RNA_A_N6_MT"/>
    <property type="match status" value="1"/>
</dbReference>
<protein>
    <recommendedName>
        <fullName evidence="1">Ribosomal RNA small subunit methyltransferase A</fullName>
        <ecNumber evidence="1">2.1.1.182</ecNumber>
    </recommendedName>
    <alternativeName>
        <fullName evidence="1">16S rRNA (adenine(1518)-N(6)/adenine(1519)-N(6))-dimethyltransferase</fullName>
    </alternativeName>
    <alternativeName>
        <fullName evidence="1">16S rRNA dimethyladenosine transferase</fullName>
    </alternativeName>
    <alternativeName>
        <fullName evidence="1">16S rRNA dimethylase</fullName>
    </alternativeName>
    <alternativeName>
        <fullName evidence="1">S-adenosylmethionine-6-N', N'-adenosyl(rRNA) dimethyltransferase</fullName>
    </alternativeName>
</protein>
<keyword id="KW-0963">Cytoplasm</keyword>
<keyword id="KW-0489">Methyltransferase</keyword>
<keyword id="KW-1185">Reference proteome</keyword>
<keyword id="KW-0694">RNA-binding</keyword>
<keyword id="KW-0698">rRNA processing</keyword>
<keyword id="KW-0949">S-adenosyl-L-methionine</keyword>
<keyword id="KW-0808">Transferase</keyword>
<comment type="function">
    <text evidence="1">Specifically dimethylates two adjacent adenosines (A1518 and A1519) in the loop of a conserved hairpin near the 3'-end of 16S rRNA in the 30S particle. May play a critical role in biogenesis of 30S subunits.</text>
</comment>
<comment type="catalytic activity">
    <reaction evidence="1">
        <text>adenosine(1518)/adenosine(1519) in 16S rRNA + 4 S-adenosyl-L-methionine = N(6)-dimethyladenosine(1518)/N(6)-dimethyladenosine(1519) in 16S rRNA + 4 S-adenosyl-L-homocysteine + 4 H(+)</text>
        <dbReference type="Rhea" id="RHEA:19609"/>
        <dbReference type="Rhea" id="RHEA-COMP:10232"/>
        <dbReference type="Rhea" id="RHEA-COMP:10233"/>
        <dbReference type="ChEBI" id="CHEBI:15378"/>
        <dbReference type="ChEBI" id="CHEBI:57856"/>
        <dbReference type="ChEBI" id="CHEBI:59789"/>
        <dbReference type="ChEBI" id="CHEBI:74411"/>
        <dbReference type="ChEBI" id="CHEBI:74493"/>
        <dbReference type="EC" id="2.1.1.182"/>
    </reaction>
</comment>
<comment type="subcellular location">
    <subcellularLocation>
        <location evidence="1">Cytoplasm</location>
    </subcellularLocation>
</comment>
<comment type="similarity">
    <text evidence="1">Belongs to the class I-like SAM-binding methyltransferase superfamily. rRNA adenine N(6)-methyltransferase family. RsmA subfamily.</text>
</comment>